<proteinExistence type="inferred from homology"/>
<feature type="chain" id="PRO_0000105491" description="DNA polymerase III subunit epsilon-like protein">
    <location>
        <begin position="1"/>
        <end position="704"/>
    </location>
</feature>
<feature type="domain" description="PAS" evidence="2">
    <location>
        <begin position="139"/>
        <end position="192"/>
    </location>
</feature>
<feature type="region of interest" description="DNA-polymerase III epsilon chain-like">
    <location>
        <begin position="511"/>
        <end position="704"/>
    </location>
</feature>
<organism>
    <name type="scientific">Rhodobacter capsulatus (strain ATCC BAA-309 / NBRC 16581 / SB1003)</name>
    <dbReference type="NCBI Taxonomy" id="272942"/>
    <lineage>
        <taxon>Bacteria</taxon>
        <taxon>Pseudomonadati</taxon>
        <taxon>Pseudomonadota</taxon>
        <taxon>Alphaproteobacteria</taxon>
        <taxon>Rhodobacterales</taxon>
        <taxon>Rhodobacter group</taxon>
        <taxon>Rhodobacter</taxon>
    </lineage>
</organism>
<dbReference type="EC" id="2.7.7.7"/>
<dbReference type="EMBL" id="AF010496">
    <property type="protein sequence ID" value="AAC16131.1"/>
    <property type="molecule type" value="Genomic_DNA"/>
</dbReference>
<dbReference type="EMBL" id="CP001312">
    <property type="protein sequence ID" value="ADE85851.1"/>
    <property type="molecule type" value="Genomic_DNA"/>
</dbReference>
<dbReference type="PIR" id="T03478">
    <property type="entry name" value="T03478"/>
</dbReference>
<dbReference type="RefSeq" id="WP_013067830.1">
    <property type="nucleotide sequence ID" value="NC_014034.1"/>
</dbReference>
<dbReference type="SMR" id="O68045"/>
<dbReference type="STRING" id="272942.RCAP_rcc02121"/>
<dbReference type="GeneID" id="31490972"/>
<dbReference type="KEGG" id="rcp:RCAP_rcc02121"/>
<dbReference type="eggNOG" id="COG2176">
    <property type="taxonomic scope" value="Bacteria"/>
</dbReference>
<dbReference type="eggNOG" id="COG5002">
    <property type="taxonomic scope" value="Bacteria"/>
</dbReference>
<dbReference type="HOGENOM" id="CLU_017573_0_0_5"/>
<dbReference type="OrthoDB" id="9804290at2"/>
<dbReference type="Proteomes" id="UP000002361">
    <property type="component" value="Chromosome"/>
</dbReference>
<dbReference type="GO" id="GO:0005829">
    <property type="term" value="C:cytosol"/>
    <property type="evidence" value="ECO:0007669"/>
    <property type="project" value="TreeGrafter"/>
</dbReference>
<dbReference type="GO" id="GO:0008408">
    <property type="term" value="F:3'-5' exonuclease activity"/>
    <property type="evidence" value="ECO:0007669"/>
    <property type="project" value="TreeGrafter"/>
</dbReference>
<dbReference type="GO" id="GO:0003677">
    <property type="term" value="F:DNA binding"/>
    <property type="evidence" value="ECO:0007669"/>
    <property type="project" value="InterPro"/>
</dbReference>
<dbReference type="GO" id="GO:0003887">
    <property type="term" value="F:DNA-directed DNA polymerase activity"/>
    <property type="evidence" value="ECO:0007669"/>
    <property type="project" value="UniProtKB-KW"/>
</dbReference>
<dbReference type="GO" id="GO:0045004">
    <property type="term" value="P:DNA replication proofreading"/>
    <property type="evidence" value="ECO:0007669"/>
    <property type="project" value="TreeGrafter"/>
</dbReference>
<dbReference type="CDD" id="cd06127">
    <property type="entry name" value="DEDDh"/>
    <property type="match status" value="1"/>
</dbReference>
<dbReference type="FunFam" id="3.30.420.10:FF:000045">
    <property type="entry name" value="3'-5' exonuclease DinG"/>
    <property type="match status" value="1"/>
</dbReference>
<dbReference type="Gene3D" id="3.30.450.20">
    <property type="entry name" value="PAS domain"/>
    <property type="match status" value="1"/>
</dbReference>
<dbReference type="Gene3D" id="3.30.420.10">
    <property type="entry name" value="Ribonuclease H-like superfamily/Ribonuclease H"/>
    <property type="match status" value="1"/>
</dbReference>
<dbReference type="InterPro" id="IPR006054">
    <property type="entry name" value="DnaQ"/>
</dbReference>
<dbReference type="InterPro" id="IPR013520">
    <property type="entry name" value="Exonuclease_RNaseT/DNA_pol3"/>
</dbReference>
<dbReference type="InterPro" id="IPR000014">
    <property type="entry name" value="PAS"/>
</dbReference>
<dbReference type="InterPro" id="IPR035965">
    <property type="entry name" value="PAS-like_dom_sf"/>
</dbReference>
<dbReference type="InterPro" id="IPR012337">
    <property type="entry name" value="RNaseH-like_sf"/>
</dbReference>
<dbReference type="InterPro" id="IPR036397">
    <property type="entry name" value="RNaseH_sf"/>
</dbReference>
<dbReference type="NCBIfam" id="TIGR00573">
    <property type="entry name" value="dnaq"/>
    <property type="match status" value="1"/>
</dbReference>
<dbReference type="PANTHER" id="PTHR30231">
    <property type="entry name" value="DNA POLYMERASE III SUBUNIT EPSILON"/>
    <property type="match status" value="1"/>
</dbReference>
<dbReference type="PANTHER" id="PTHR30231:SF41">
    <property type="entry name" value="DNA POLYMERASE III SUBUNIT EPSILON"/>
    <property type="match status" value="1"/>
</dbReference>
<dbReference type="Pfam" id="PF00929">
    <property type="entry name" value="RNase_T"/>
    <property type="match status" value="1"/>
</dbReference>
<dbReference type="SMART" id="SM00479">
    <property type="entry name" value="EXOIII"/>
    <property type="match status" value="1"/>
</dbReference>
<dbReference type="SUPFAM" id="SSF55785">
    <property type="entry name" value="PYP-like sensor domain (PAS domain)"/>
    <property type="match status" value="1"/>
</dbReference>
<dbReference type="SUPFAM" id="SSF53098">
    <property type="entry name" value="Ribonuclease H-like"/>
    <property type="match status" value="1"/>
</dbReference>
<dbReference type="PROSITE" id="PS50112">
    <property type="entry name" value="PAS"/>
    <property type="match status" value="1"/>
</dbReference>
<protein>
    <recommendedName>
        <fullName>DNA polymerase III subunit epsilon-like protein</fullName>
        <ecNumber>2.7.7.7</ecNumber>
    </recommendedName>
</protein>
<name>DPO3E_RHOCB</name>
<evidence type="ECO:0000250" key="1"/>
<evidence type="ECO:0000255" key="2">
    <source>
        <dbReference type="PROSITE-ProRule" id="PRU00140"/>
    </source>
</evidence>
<evidence type="ECO:0000305" key="3"/>
<reference key="1">
    <citation type="journal article" date="1997" name="Proc. Natl. Acad. Sci. U.S.A.">
        <title>Sequence of a 189-kb segment of the chromosome of Rhodobacter capsulatus SB1003.</title>
        <authorList>
            <person name="Vlcek C."/>
            <person name="Paces V."/>
            <person name="Maltsev N."/>
            <person name="Paces J."/>
            <person name="Haselkorn R."/>
            <person name="Fonstein M."/>
        </authorList>
    </citation>
    <scope>NUCLEOTIDE SEQUENCE [GENOMIC DNA]</scope>
    <source>
        <strain>ATCC BAA-309 / NBRC 16581 / SB1003</strain>
    </source>
</reference>
<reference key="2">
    <citation type="journal article" date="2010" name="J. Bacteriol.">
        <title>Complete genome sequence of the photosynthetic purple nonsulfur bacterium Rhodobacter capsulatus SB 1003.</title>
        <authorList>
            <person name="Strnad H."/>
            <person name="Lapidus A."/>
            <person name="Paces J."/>
            <person name="Ulbrich P."/>
            <person name="Vlcek C."/>
            <person name="Paces V."/>
            <person name="Haselkorn R."/>
        </authorList>
    </citation>
    <scope>NUCLEOTIDE SEQUENCE [LARGE SCALE GENOMIC DNA]</scope>
    <source>
        <strain>ATCC BAA-309 / NBRC 16581 / SB1003</strain>
    </source>
</reference>
<sequence>MGLARLSLRLRIFLFFAALAMGNLAALVAGLVFGFHKLARPEALSGFVIGGTVAGLVILGLIGVVWALFDANLARPIERLAGSIRARTQTAVDSALDESAGRYLGDLAPAAAAIAQHLNETRSALTEAVQRETTRLAREKDRLETLLSDVPVGVLLCTADHALVFYNGQAVDLLGGAHAPGLDRRVFDYLHPAPIRHAHARLLATADPDAASDLLCATVADGRTLAARMRLISEGEDHQVRRLAGYVLTLRDVSADLRAHAGREALMDELFDRIRRPAAALQSLMGVLIAEDGPADPQARAQLREAARAEAGHLAQAIHSLHDRHEAMRADWWPLAMIRASDFGAAVQARVAAEGAGDLLPVTAALLLRLEGFEMVALIAHLVRRLGPGRAEKRLEVLEDGAGALIALEWRGAAVAIADLELWLSEPLDVGQAEVTGRRVLSVHATDLWPERLHEGRHRLCLPLREARRIGPDPHPVPRPVPRQVVYDFDLLGRGGESALAETPLDKLTFVVFDTETTGLFPTGGDEIVQIAAVRIVNGRRVAGEVFDTLVNPGRPIPAASTAVHGITEAMVATAPAIAEVGRRFHKFAEGAVLVAHNAPFDLEFLRRKELLIGKNFDNPVLDTVLLSAVVFGAAEGHSLDALTHRLGITIPEEARHTALGDTVATAEAFLRLLPALKARGLTTFGAVLTEVRKHGRLMRDMNA</sequence>
<keyword id="KW-0235">DNA replication</keyword>
<keyword id="KW-0239">DNA-directed DNA polymerase</keyword>
<keyword id="KW-0548">Nucleotidyltransferase</keyword>
<keyword id="KW-1185">Reference proteome</keyword>
<keyword id="KW-0808">Transferase</keyword>
<accession>O68045</accession>
<accession>D5AV69</accession>
<comment type="function">
    <text evidence="1">DNA polymerase III is a complex, multichain enzyme responsible for most of the replicative synthesis in bacteria. The epsilon subunit contain the editing function and is a proofreading 3'-5' exonuclease (By similarity).</text>
</comment>
<comment type="catalytic activity">
    <reaction>
        <text>DNA(n) + a 2'-deoxyribonucleoside 5'-triphosphate = DNA(n+1) + diphosphate</text>
        <dbReference type="Rhea" id="RHEA:22508"/>
        <dbReference type="Rhea" id="RHEA-COMP:17339"/>
        <dbReference type="Rhea" id="RHEA-COMP:17340"/>
        <dbReference type="ChEBI" id="CHEBI:33019"/>
        <dbReference type="ChEBI" id="CHEBI:61560"/>
        <dbReference type="ChEBI" id="CHEBI:173112"/>
        <dbReference type="EC" id="2.7.7.7"/>
    </reaction>
</comment>
<comment type="subunit">
    <text evidence="1">DNA polymerase III contains a core (composed of alpha, epsilon and theta chains) that associates with a tau subunit. This core dimerizes to form the POLIII' complex. PolIII' associates with the gamma complex (composed of gamma, delta, delta', psi and chi chains) and with the beta chain to form the complete DNA polymerase III complex (By similarity).</text>
</comment>
<comment type="similarity">
    <text evidence="3">In the C-terminal section; belongs to the DNA polymerase III epsilon chain family.</text>
</comment>
<comment type="caution">
    <text evidence="3">There might be a sequencing error that fuses together two ORFs.</text>
</comment>
<gene>
    <name type="primary">dnaQ</name>
    <name type="ordered locus">RCAP_rcc02121</name>
</gene>